<feature type="chain" id="PRO_1000140836" description="Small ribosomal subunit protein uS5">
    <location>
        <begin position="1"/>
        <end position="189"/>
    </location>
</feature>
<feature type="domain" description="S5 DRBM" evidence="1">
    <location>
        <begin position="20"/>
        <end position="83"/>
    </location>
</feature>
<name>RS5_BEII9</name>
<sequence length="189" mass="20208">MAREGEGGGRGGREERDSEFVDRLVHINRVAKVVKGGRRFGFAALVVVGDQKGRVGYGHGKAREVPEAIRKATESAKRALIRVPLREGRTLHHDVNGRHGAGRVVLRAAPAGTGIIAGGPMRAVFETLGMHDVVAKSQGSSNPYNMIRATFDALQREDSPRAVAARRSLKVSVLQGRRLGGDTETAAEG</sequence>
<proteinExistence type="inferred from homology"/>
<dbReference type="EMBL" id="CP001016">
    <property type="protein sequence ID" value="ACB95011.1"/>
    <property type="molecule type" value="Genomic_DNA"/>
</dbReference>
<dbReference type="RefSeq" id="WP_012384368.1">
    <property type="nucleotide sequence ID" value="NC_010581.1"/>
</dbReference>
<dbReference type="SMR" id="B2IK79"/>
<dbReference type="STRING" id="395963.Bind_1371"/>
<dbReference type="KEGG" id="bid:Bind_1371"/>
<dbReference type="eggNOG" id="COG0098">
    <property type="taxonomic scope" value="Bacteria"/>
</dbReference>
<dbReference type="HOGENOM" id="CLU_065898_2_2_5"/>
<dbReference type="OrthoDB" id="9809045at2"/>
<dbReference type="Proteomes" id="UP000001695">
    <property type="component" value="Chromosome"/>
</dbReference>
<dbReference type="GO" id="GO:0015935">
    <property type="term" value="C:small ribosomal subunit"/>
    <property type="evidence" value="ECO:0007669"/>
    <property type="project" value="InterPro"/>
</dbReference>
<dbReference type="GO" id="GO:0019843">
    <property type="term" value="F:rRNA binding"/>
    <property type="evidence" value="ECO:0007669"/>
    <property type="project" value="UniProtKB-UniRule"/>
</dbReference>
<dbReference type="GO" id="GO:0003735">
    <property type="term" value="F:structural constituent of ribosome"/>
    <property type="evidence" value="ECO:0007669"/>
    <property type="project" value="InterPro"/>
</dbReference>
<dbReference type="GO" id="GO:0006412">
    <property type="term" value="P:translation"/>
    <property type="evidence" value="ECO:0007669"/>
    <property type="project" value="UniProtKB-UniRule"/>
</dbReference>
<dbReference type="FunFam" id="3.30.160.20:FF:000001">
    <property type="entry name" value="30S ribosomal protein S5"/>
    <property type="match status" value="1"/>
</dbReference>
<dbReference type="FunFam" id="3.30.230.10:FF:000002">
    <property type="entry name" value="30S ribosomal protein S5"/>
    <property type="match status" value="1"/>
</dbReference>
<dbReference type="Gene3D" id="3.30.160.20">
    <property type="match status" value="1"/>
</dbReference>
<dbReference type="Gene3D" id="3.30.230.10">
    <property type="match status" value="1"/>
</dbReference>
<dbReference type="HAMAP" id="MF_01307_B">
    <property type="entry name" value="Ribosomal_uS5_B"/>
    <property type="match status" value="1"/>
</dbReference>
<dbReference type="InterPro" id="IPR020568">
    <property type="entry name" value="Ribosomal_Su5_D2-typ_SF"/>
</dbReference>
<dbReference type="InterPro" id="IPR000851">
    <property type="entry name" value="Ribosomal_uS5"/>
</dbReference>
<dbReference type="InterPro" id="IPR005712">
    <property type="entry name" value="Ribosomal_uS5_bac-type"/>
</dbReference>
<dbReference type="InterPro" id="IPR005324">
    <property type="entry name" value="Ribosomal_uS5_C"/>
</dbReference>
<dbReference type="InterPro" id="IPR013810">
    <property type="entry name" value="Ribosomal_uS5_N"/>
</dbReference>
<dbReference type="InterPro" id="IPR018192">
    <property type="entry name" value="Ribosomal_uS5_N_CS"/>
</dbReference>
<dbReference type="InterPro" id="IPR014721">
    <property type="entry name" value="Ribsml_uS5_D2-typ_fold_subgr"/>
</dbReference>
<dbReference type="NCBIfam" id="TIGR01021">
    <property type="entry name" value="rpsE_bact"/>
    <property type="match status" value="1"/>
</dbReference>
<dbReference type="PANTHER" id="PTHR48277">
    <property type="entry name" value="MITOCHONDRIAL RIBOSOMAL PROTEIN S5"/>
    <property type="match status" value="1"/>
</dbReference>
<dbReference type="PANTHER" id="PTHR48277:SF1">
    <property type="entry name" value="MITOCHONDRIAL RIBOSOMAL PROTEIN S5"/>
    <property type="match status" value="1"/>
</dbReference>
<dbReference type="Pfam" id="PF00333">
    <property type="entry name" value="Ribosomal_S5"/>
    <property type="match status" value="1"/>
</dbReference>
<dbReference type="Pfam" id="PF03719">
    <property type="entry name" value="Ribosomal_S5_C"/>
    <property type="match status" value="1"/>
</dbReference>
<dbReference type="SUPFAM" id="SSF54768">
    <property type="entry name" value="dsRNA-binding domain-like"/>
    <property type="match status" value="1"/>
</dbReference>
<dbReference type="SUPFAM" id="SSF54211">
    <property type="entry name" value="Ribosomal protein S5 domain 2-like"/>
    <property type="match status" value="1"/>
</dbReference>
<dbReference type="PROSITE" id="PS00585">
    <property type="entry name" value="RIBOSOMAL_S5"/>
    <property type="match status" value="1"/>
</dbReference>
<dbReference type="PROSITE" id="PS50881">
    <property type="entry name" value="S5_DSRBD"/>
    <property type="match status" value="1"/>
</dbReference>
<gene>
    <name evidence="1" type="primary">rpsE</name>
    <name type="ordered locus">Bind_1371</name>
</gene>
<organism>
    <name type="scientific">Beijerinckia indica subsp. indica (strain ATCC 9039 / DSM 1715 / NCIMB 8712)</name>
    <dbReference type="NCBI Taxonomy" id="395963"/>
    <lineage>
        <taxon>Bacteria</taxon>
        <taxon>Pseudomonadati</taxon>
        <taxon>Pseudomonadota</taxon>
        <taxon>Alphaproteobacteria</taxon>
        <taxon>Hyphomicrobiales</taxon>
        <taxon>Beijerinckiaceae</taxon>
        <taxon>Beijerinckia</taxon>
    </lineage>
</organism>
<protein>
    <recommendedName>
        <fullName evidence="1">Small ribosomal subunit protein uS5</fullName>
    </recommendedName>
    <alternativeName>
        <fullName evidence="2">30S ribosomal protein S5</fullName>
    </alternativeName>
</protein>
<keyword id="KW-1185">Reference proteome</keyword>
<keyword id="KW-0687">Ribonucleoprotein</keyword>
<keyword id="KW-0689">Ribosomal protein</keyword>
<keyword id="KW-0694">RNA-binding</keyword>
<keyword id="KW-0699">rRNA-binding</keyword>
<comment type="function">
    <text evidence="1">With S4 and S12 plays an important role in translational accuracy.</text>
</comment>
<comment type="function">
    <text evidence="1">Located at the back of the 30S subunit body where it stabilizes the conformation of the head with respect to the body.</text>
</comment>
<comment type="subunit">
    <text evidence="1">Part of the 30S ribosomal subunit. Contacts proteins S4 and S8.</text>
</comment>
<comment type="domain">
    <text>The N-terminal domain interacts with the head of the 30S subunit; the C-terminal domain interacts with the body and contacts protein S4. The interaction surface between S4 and S5 is involved in control of translational fidelity.</text>
</comment>
<comment type="similarity">
    <text evidence="1">Belongs to the universal ribosomal protein uS5 family.</text>
</comment>
<reference key="1">
    <citation type="journal article" date="2010" name="J. Bacteriol.">
        <title>Complete genome sequence of Beijerinckia indica subsp. indica.</title>
        <authorList>
            <person name="Tamas I."/>
            <person name="Dedysh S.N."/>
            <person name="Liesack W."/>
            <person name="Stott M.B."/>
            <person name="Alam M."/>
            <person name="Murrell J.C."/>
            <person name="Dunfield P.F."/>
        </authorList>
    </citation>
    <scope>NUCLEOTIDE SEQUENCE [LARGE SCALE GENOMIC DNA]</scope>
    <source>
        <strain>ATCC 9039 / DSM 1715 / NCIMB 8712</strain>
    </source>
</reference>
<evidence type="ECO:0000255" key="1">
    <source>
        <dbReference type="HAMAP-Rule" id="MF_01307"/>
    </source>
</evidence>
<evidence type="ECO:0000305" key="2"/>
<accession>B2IK79</accession>